<feature type="chain" id="PRO_0000118159" description="NADH-ubiquinone oxidoreductase chain 5">
    <location>
        <begin position="1"/>
        <end position="590"/>
    </location>
</feature>
<feature type="transmembrane region" description="Helical" evidence="2">
    <location>
        <begin position="1"/>
        <end position="21"/>
    </location>
</feature>
<feature type="transmembrane region" description="Helical" evidence="2">
    <location>
        <begin position="28"/>
        <end position="48"/>
    </location>
</feature>
<feature type="transmembrane region" description="Helical" evidence="2">
    <location>
        <begin position="58"/>
        <end position="78"/>
    </location>
</feature>
<feature type="transmembrane region" description="Helical" evidence="2">
    <location>
        <begin position="81"/>
        <end position="101"/>
    </location>
</feature>
<feature type="transmembrane region" description="Helical" evidence="2">
    <location>
        <begin position="113"/>
        <end position="133"/>
    </location>
</feature>
<feature type="transmembrane region" description="Helical" evidence="2">
    <location>
        <begin position="136"/>
        <end position="156"/>
    </location>
</feature>
<feature type="transmembrane region" description="Helical" evidence="2">
    <location>
        <begin position="176"/>
        <end position="198"/>
    </location>
</feature>
<feature type="transmembrane region" description="Helical" evidence="2">
    <location>
        <begin position="245"/>
        <end position="265"/>
    </location>
</feature>
<feature type="transmembrane region" description="Helical" evidence="2">
    <location>
        <begin position="273"/>
        <end position="293"/>
    </location>
</feature>
<feature type="transmembrane region" description="Helical" evidence="2">
    <location>
        <begin position="310"/>
        <end position="330"/>
    </location>
</feature>
<feature type="transmembrane region" description="Helical" evidence="2">
    <location>
        <begin position="333"/>
        <end position="353"/>
    </location>
</feature>
<feature type="transmembrane region" description="Helical" evidence="2">
    <location>
        <begin position="372"/>
        <end position="392"/>
    </location>
</feature>
<feature type="transmembrane region" description="Helical" evidence="2">
    <location>
        <begin position="395"/>
        <end position="415"/>
    </location>
</feature>
<feature type="transmembrane region" description="Helical" evidence="2">
    <location>
        <begin position="428"/>
        <end position="450"/>
    </location>
</feature>
<feature type="transmembrane region" description="Helical" evidence="2">
    <location>
        <begin position="461"/>
        <end position="481"/>
    </location>
</feature>
<feature type="transmembrane region" description="Helical" evidence="2">
    <location>
        <begin position="501"/>
        <end position="521"/>
    </location>
</feature>
<feature type="transmembrane region" description="Helical" evidence="2">
    <location>
        <begin position="536"/>
        <end position="556"/>
    </location>
</feature>
<feature type="transmembrane region" description="Helical" evidence="2">
    <location>
        <begin position="568"/>
        <end position="588"/>
    </location>
</feature>
<comment type="function">
    <text evidence="1">Core subunit of the mitochondrial membrane respiratory chain NADH dehydrogenase (Complex I) that is believed to belong to the minimal assembly required for catalysis. Complex I functions in the transfer of electrons from NADH to the respiratory chain. The immediate electron acceptor for the enzyme is believed to be ubiquinone (By similarity).</text>
</comment>
<comment type="catalytic activity">
    <reaction>
        <text>a ubiquinone + NADH + 5 H(+)(in) = a ubiquinol + NAD(+) + 4 H(+)(out)</text>
        <dbReference type="Rhea" id="RHEA:29091"/>
        <dbReference type="Rhea" id="RHEA-COMP:9565"/>
        <dbReference type="Rhea" id="RHEA-COMP:9566"/>
        <dbReference type="ChEBI" id="CHEBI:15378"/>
        <dbReference type="ChEBI" id="CHEBI:16389"/>
        <dbReference type="ChEBI" id="CHEBI:17976"/>
        <dbReference type="ChEBI" id="CHEBI:57540"/>
        <dbReference type="ChEBI" id="CHEBI:57945"/>
        <dbReference type="EC" id="7.1.1.2"/>
    </reaction>
</comment>
<comment type="subcellular location">
    <subcellularLocation>
        <location evidence="1">Mitochondrion inner membrane</location>
        <topology evidence="1">Multi-pass membrane protein</topology>
    </subcellularLocation>
</comment>
<comment type="similarity">
    <text evidence="3">Belongs to the complex I subunit 5 family.</text>
</comment>
<gene>
    <name type="primary">ND5</name>
</gene>
<protein>
    <recommendedName>
        <fullName>NADH-ubiquinone oxidoreductase chain 5</fullName>
        <ecNumber>7.1.1.2</ecNumber>
    </recommendedName>
    <alternativeName>
        <fullName>NADH dehydrogenase subunit 5</fullName>
    </alternativeName>
</protein>
<accession>P04540</accession>
<keyword id="KW-0249">Electron transport</keyword>
<keyword id="KW-0472">Membrane</keyword>
<keyword id="KW-0496">Mitochondrion</keyword>
<keyword id="KW-0999">Mitochondrion inner membrane</keyword>
<keyword id="KW-0520">NAD</keyword>
<keyword id="KW-0679">Respiratory chain</keyword>
<keyword id="KW-1278">Translocase</keyword>
<keyword id="KW-0812">Transmembrane</keyword>
<keyword id="KW-1133">Transmembrane helix</keyword>
<keyword id="KW-0813">Transport</keyword>
<keyword id="KW-0830">Ubiquinone</keyword>
<organism>
    <name type="scientific">Trypanosoma brucei brucei</name>
    <dbReference type="NCBI Taxonomy" id="5702"/>
    <lineage>
        <taxon>Eukaryota</taxon>
        <taxon>Discoba</taxon>
        <taxon>Euglenozoa</taxon>
        <taxon>Kinetoplastea</taxon>
        <taxon>Metakinetoplastina</taxon>
        <taxon>Trypanosomatida</taxon>
        <taxon>Trypanosomatidae</taxon>
        <taxon>Trypanosoma</taxon>
    </lineage>
</organism>
<dbReference type="EC" id="7.1.1.2"/>
<dbReference type="EMBL" id="X01094">
    <property type="protein sequence ID" value="CAB57807.1"/>
    <property type="molecule type" value="Genomic_DNA"/>
</dbReference>
<dbReference type="EMBL" id="M14820">
    <property type="protein sequence ID" value="AAB59225.1"/>
    <property type="molecule type" value="Genomic_DNA"/>
</dbReference>
<dbReference type="PIR" id="A04519">
    <property type="entry name" value="QQUTC5"/>
</dbReference>
<dbReference type="SMR" id="P04540"/>
<dbReference type="GO" id="GO:0005743">
    <property type="term" value="C:mitochondrial inner membrane"/>
    <property type="evidence" value="ECO:0007669"/>
    <property type="project" value="UniProtKB-SubCell"/>
</dbReference>
<dbReference type="GO" id="GO:0008137">
    <property type="term" value="F:NADH dehydrogenase (ubiquinone) activity"/>
    <property type="evidence" value="ECO:0007669"/>
    <property type="project" value="UniProtKB-EC"/>
</dbReference>
<dbReference type="GO" id="GO:0042773">
    <property type="term" value="P:ATP synthesis coupled electron transport"/>
    <property type="evidence" value="ECO:0007669"/>
    <property type="project" value="InterPro"/>
</dbReference>
<dbReference type="GO" id="GO:0015990">
    <property type="term" value="P:electron transport coupled proton transport"/>
    <property type="evidence" value="ECO:0007669"/>
    <property type="project" value="TreeGrafter"/>
</dbReference>
<dbReference type="InterPro" id="IPR001750">
    <property type="entry name" value="ND/Mrp_TM"/>
</dbReference>
<dbReference type="InterPro" id="IPR003945">
    <property type="entry name" value="NU5C-like"/>
</dbReference>
<dbReference type="PANTHER" id="PTHR42829">
    <property type="entry name" value="NADH-UBIQUINONE OXIDOREDUCTASE CHAIN 5"/>
    <property type="match status" value="1"/>
</dbReference>
<dbReference type="PANTHER" id="PTHR42829:SF2">
    <property type="entry name" value="NADH-UBIQUINONE OXIDOREDUCTASE CHAIN 5"/>
    <property type="match status" value="1"/>
</dbReference>
<dbReference type="Pfam" id="PF00361">
    <property type="entry name" value="Proton_antipo_M"/>
    <property type="match status" value="1"/>
</dbReference>
<dbReference type="PRINTS" id="PR01434">
    <property type="entry name" value="NADHDHGNASE5"/>
</dbReference>
<sequence length="590" mass="71495">MFLIFFLFFIMFGFISGSFMFGRNFLSFWLSLVMIIFIVLCMIFSFLMVSVCLYGYYYYDFCLILMLDFCFIWLTYVCSGFYMFIMLLINMVFCFIVFYAFYYMYFDMLLGRFLIIFWIFVVCMNLFILSYDFLTAYCGWELLGLFSFFLISYFWYRFFALKFGFKAFFIGKIGDVLLIFAFSIIFLSNGFCMTTFYFLNFFCMDYYYIEFSICLLVGCAFTKSTQFGLHIWLPDAMEGPIPVSALIHAATLVVCGIILLSFVYWCFDFWFSYFYNLIGWSTLILILMTLCVFYNFDVKRYVAFSTICQISFSMFCCLCIDIYIGSLFFCYHMFYKATLFIVLGIWIHIFFGLQDLRCYFFMYFCGCVLARLLLIFAILNSCSIWFLCGFYCKDMLLALLMLLSFYNIIEFLFISIIFIFFTMIYNYFLLFFLMFVFKCFCLVDCLFLLFDYECCLVYCLISLYMCILSIFFIIDFVCIFVFSSYCVFWSFFLNFYNFFDIAIFVVFLILSVGFLYYGCLFFYFFNIDCIMLFWRIFFVIIILVVFMIFCCWYFVCMIIFMLLFVWNFVIYFRYNLKYCLFFCILWILYV</sequence>
<geneLocation type="mitochondrion"/>
<name>NU5M_TRYBB</name>
<reference key="1">
    <citation type="journal article" date="1984" name="Nucleic Acids Res.">
        <title>The sequence of the gene for cytochrome c oxidase subunit I, a frameshift containing gene for cytochrome c oxidase subunit II and seven unassigned reading frames in Trypanosoma brucei mitochondrial maxi-circle DNA.</title>
        <authorList>
            <person name="Hensgens L.A.M."/>
            <person name="Brakenhoff J."/>
            <person name="de Vries B.F."/>
            <person name="Sloof P."/>
            <person name="Tromp M.C."/>
            <person name="van Boom J.H."/>
            <person name="Benne R."/>
        </authorList>
    </citation>
    <scope>NUCLEOTIDE SEQUENCE [GENOMIC DNA]</scope>
</reference>
<reference key="2">
    <citation type="journal article" date="1987" name="Mol. Biochem. Parasitol.">
        <title>Variation of G-rich mitochondrial transcripts among stocks of Trypanosoma brucei.</title>
        <authorList>
            <person name="Jasmer D.P."/>
            <person name="Feagin J.E."/>
            <person name="Payne M."/>
            <person name="Stuart K."/>
        </authorList>
    </citation>
    <scope>NUCLEOTIDE SEQUENCE [GENOMIC DNA]</scope>
    <source>
        <strain>EATRO 164</strain>
    </source>
</reference>
<proteinExistence type="inferred from homology"/>
<evidence type="ECO:0000250" key="1"/>
<evidence type="ECO:0000255" key="2"/>
<evidence type="ECO:0000305" key="3"/>